<protein>
    <recommendedName>
        <fullName evidence="1">6,7-dimethyl-8-ribityllumazine synthase</fullName>
        <shortName evidence="1">DMRL synthase</shortName>
        <shortName evidence="1">LS</shortName>
        <shortName evidence="1">Lumazine synthase</shortName>
        <ecNumber evidence="1">2.5.1.78</ecNumber>
    </recommendedName>
</protein>
<comment type="function">
    <text evidence="1">Catalyzes the formation of 6,7-dimethyl-8-ribityllumazine by condensation of 5-amino-6-(D-ribitylamino)uracil with 3,4-dihydroxy-2-butanone 4-phosphate. This is the penultimate step in the biosynthesis of riboflavin.</text>
</comment>
<comment type="catalytic activity">
    <reaction evidence="1">
        <text>(2S)-2-hydroxy-3-oxobutyl phosphate + 5-amino-6-(D-ribitylamino)uracil = 6,7-dimethyl-8-(1-D-ribityl)lumazine + phosphate + 2 H2O + H(+)</text>
        <dbReference type="Rhea" id="RHEA:26152"/>
        <dbReference type="ChEBI" id="CHEBI:15377"/>
        <dbReference type="ChEBI" id="CHEBI:15378"/>
        <dbReference type="ChEBI" id="CHEBI:15934"/>
        <dbReference type="ChEBI" id="CHEBI:43474"/>
        <dbReference type="ChEBI" id="CHEBI:58201"/>
        <dbReference type="ChEBI" id="CHEBI:58830"/>
        <dbReference type="EC" id="2.5.1.78"/>
    </reaction>
</comment>
<comment type="pathway">
    <text evidence="1">Cofactor biosynthesis; riboflavin biosynthesis; riboflavin from 2-hydroxy-3-oxobutyl phosphate and 5-amino-6-(D-ribitylamino)uracil: step 1/2.</text>
</comment>
<comment type="subunit">
    <text evidence="1">Forms an icosahedral capsid composed of 60 subunits, arranged as a dodecamer of pentamers.</text>
</comment>
<comment type="similarity">
    <text evidence="1">Belongs to the DMRL synthase family.</text>
</comment>
<organism>
    <name type="scientific">Buchnera aphidicola subsp. Baizongia pistaciae (strain Bp)</name>
    <dbReference type="NCBI Taxonomy" id="224915"/>
    <lineage>
        <taxon>Bacteria</taxon>
        <taxon>Pseudomonadati</taxon>
        <taxon>Pseudomonadota</taxon>
        <taxon>Gammaproteobacteria</taxon>
        <taxon>Enterobacterales</taxon>
        <taxon>Erwiniaceae</taxon>
        <taxon>Buchnera</taxon>
    </lineage>
</organism>
<keyword id="KW-1185">Reference proteome</keyword>
<keyword id="KW-0686">Riboflavin biosynthesis</keyword>
<keyword id="KW-0808">Transferase</keyword>
<feature type="chain" id="PRO_0000134732" description="6,7-dimethyl-8-ribityllumazine synthase">
    <location>
        <begin position="1"/>
        <end position="159"/>
    </location>
</feature>
<feature type="active site" description="Proton donor" evidence="1">
    <location>
        <position position="90"/>
    </location>
</feature>
<feature type="binding site" evidence="1">
    <location>
        <position position="23"/>
    </location>
    <ligand>
        <name>5-amino-6-(D-ribitylamino)uracil</name>
        <dbReference type="ChEBI" id="CHEBI:15934"/>
    </ligand>
</feature>
<feature type="binding site" evidence="1">
    <location>
        <begin position="58"/>
        <end position="60"/>
    </location>
    <ligand>
        <name>5-amino-6-(D-ribitylamino)uracil</name>
        <dbReference type="ChEBI" id="CHEBI:15934"/>
    </ligand>
</feature>
<feature type="binding site" evidence="1">
    <location>
        <begin position="82"/>
        <end position="84"/>
    </location>
    <ligand>
        <name>5-amino-6-(D-ribitylamino)uracil</name>
        <dbReference type="ChEBI" id="CHEBI:15934"/>
    </ligand>
</feature>
<feature type="binding site" evidence="1">
    <location>
        <position position="115"/>
    </location>
    <ligand>
        <name>5-amino-6-(D-ribitylamino)uracil</name>
        <dbReference type="ChEBI" id="CHEBI:15934"/>
    </ligand>
</feature>
<feature type="binding site" evidence="1">
    <location>
        <position position="129"/>
    </location>
    <ligand>
        <name>(2S)-2-hydroxy-3-oxobutyl phosphate</name>
        <dbReference type="ChEBI" id="CHEBI:58830"/>
    </ligand>
</feature>
<accession>Q89AB1</accession>
<evidence type="ECO:0000255" key="1">
    <source>
        <dbReference type="HAMAP-Rule" id="MF_00178"/>
    </source>
</evidence>
<sequence length="159" mass="17331">MKIVQETISTKTKKNIAIIISRYNNFINQHLLDGALDILKRIGQINQKNIPIIHVPGAYEIPIIASIISKQKKYNAIIALGTIIKGHTLHYSHISHAVNSGLTNISITNNIPISIGIITANNIEQAIERAGTKLGNKGSEAALTALEMINIINILAQNK</sequence>
<reference key="1">
    <citation type="journal article" date="2003" name="Proc. Natl. Acad. Sci. U.S.A.">
        <title>Reductive genome evolution in Buchnera aphidicola.</title>
        <authorList>
            <person name="van Ham R.C.H.J."/>
            <person name="Kamerbeek J."/>
            <person name="Palacios C."/>
            <person name="Rausell C."/>
            <person name="Abascal F."/>
            <person name="Bastolla U."/>
            <person name="Fernandez J.M."/>
            <person name="Jimenez L."/>
            <person name="Postigo M."/>
            <person name="Silva F.J."/>
            <person name="Tamames J."/>
            <person name="Viguera E."/>
            <person name="Latorre A."/>
            <person name="Valencia A."/>
            <person name="Moran F."/>
            <person name="Moya A."/>
        </authorList>
    </citation>
    <scope>NUCLEOTIDE SEQUENCE [LARGE SCALE GENOMIC DNA]</scope>
    <source>
        <strain>Bp</strain>
    </source>
</reference>
<dbReference type="EC" id="2.5.1.78" evidence="1"/>
<dbReference type="EMBL" id="AE016826">
    <property type="protein sequence ID" value="AAO27118.1"/>
    <property type="molecule type" value="Genomic_DNA"/>
</dbReference>
<dbReference type="RefSeq" id="WP_011091519.1">
    <property type="nucleotide sequence ID" value="NC_004545.1"/>
</dbReference>
<dbReference type="SMR" id="Q89AB1"/>
<dbReference type="STRING" id="224915.bbp_407"/>
<dbReference type="KEGG" id="bab:bbp_407"/>
<dbReference type="eggNOG" id="COG0054">
    <property type="taxonomic scope" value="Bacteria"/>
</dbReference>
<dbReference type="HOGENOM" id="CLU_089358_1_1_6"/>
<dbReference type="OrthoDB" id="9809709at2"/>
<dbReference type="UniPathway" id="UPA00275">
    <property type="reaction ID" value="UER00404"/>
</dbReference>
<dbReference type="Proteomes" id="UP000000601">
    <property type="component" value="Chromosome"/>
</dbReference>
<dbReference type="GO" id="GO:0005829">
    <property type="term" value="C:cytosol"/>
    <property type="evidence" value="ECO:0007669"/>
    <property type="project" value="TreeGrafter"/>
</dbReference>
<dbReference type="GO" id="GO:0009349">
    <property type="term" value="C:riboflavin synthase complex"/>
    <property type="evidence" value="ECO:0007669"/>
    <property type="project" value="InterPro"/>
</dbReference>
<dbReference type="GO" id="GO:0000906">
    <property type="term" value="F:6,7-dimethyl-8-ribityllumazine synthase activity"/>
    <property type="evidence" value="ECO:0007669"/>
    <property type="project" value="UniProtKB-UniRule"/>
</dbReference>
<dbReference type="GO" id="GO:0009231">
    <property type="term" value="P:riboflavin biosynthetic process"/>
    <property type="evidence" value="ECO:0007669"/>
    <property type="project" value="UniProtKB-UniRule"/>
</dbReference>
<dbReference type="CDD" id="cd09209">
    <property type="entry name" value="Lumazine_synthase-I"/>
    <property type="match status" value="1"/>
</dbReference>
<dbReference type="Gene3D" id="3.40.50.960">
    <property type="entry name" value="Lumazine/riboflavin synthase"/>
    <property type="match status" value="1"/>
</dbReference>
<dbReference type="HAMAP" id="MF_00178">
    <property type="entry name" value="Lumazine_synth"/>
    <property type="match status" value="1"/>
</dbReference>
<dbReference type="InterPro" id="IPR034964">
    <property type="entry name" value="LS"/>
</dbReference>
<dbReference type="InterPro" id="IPR002180">
    <property type="entry name" value="LS/RS"/>
</dbReference>
<dbReference type="InterPro" id="IPR036467">
    <property type="entry name" value="LS/RS_sf"/>
</dbReference>
<dbReference type="NCBIfam" id="TIGR00114">
    <property type="entry name" value="lumazine-synth"/>
    <property type="match status" value="1"/>
</dbReference>
<dbReference type="NCBIfam" id="NF000812">
    <property type="entry name" value="PRK00061.1-4"/>
    <property type="match status" value="1"/>
</dbReference>
<dbReference type="PANTHER" id="PTHR21058:SF0">
    <property type="entry name" value="6,7-DIMETHYL-8-RIBITYLLUMAZINE SYNTHASE"/>
    <property type="match status" value="1"/>
</dbReference>
<dbReference type="PANTHER" id="PTHR21058">
    <property type="entry name" value="6,7-DIMETHYL-8-RIBITYLLUMAZINE SYNTHASE DMRL SYNTHASE LUMAZINE SYNTHASE"/>
    <property type="match status" value="1"/>
</dbReference>
<dbReference type="Pfam" id="PF00885">
    <property type="entry name" value="DMRL_synthase"/>
    <property type="match status" value="1"/>
</dbReference>
<dbReference type="SUPFAM" id="SSF52121">
    <property type="entry name" value="Lumazine synthase"/>
    <property type="match status" value="1"/>
</dbReference>
<proteinExistence type="inferred from homology"/>
<gene>
    <name evidence="1" type="primary">ribH</name>
    <name type="ordered locus">bbp_407</name>
</gene>
<name>RISB_BUCBP</name>